<evidence type="ECO:0000250" key="1"/>
<evidence type="ECO:0000255" key="2"/>
<evidence type="ECO:0000255" key="3">
    <source>
        <dbReference type="PROSITE-ProRule" id="PRU00716"/>
    </source>
</evidence>
<evidence type="ECO:0000305" key="4"/>
<gene>
    <name type="primary">mcr1</name>
    <name type="ORF">NFIA_020210</name>
</gene>
<organism>
    <name type="scientific">Neosartorya fischeri (strain ATCC 1020 / DSM 3700 / CBS 544.65 / FGSC A1164 / JCM 1740 / NRRL 181 / WB 181)</name>
    <name type="common">Aspergillus fischerianus</name>
    <dbReference type="NCBI Taxonomy" id="331117"/>
    <lineage>
        <taxon>Eukaryota</taxon>
        <taxon>Fungi</taxon>
        <taxon>Dikarya</taxon>
        <taxon>Ascomycota</taxon>
        <taxon>Pezizomycotina</taxon>
        <taxon>Eurotiomycetes</taxon>
        <taxon>Eurotiomycetidae</taxon>
        <taxon>Eurotiales</taxon>
        <taxon>Aspergillaceae</taxon>
        <taxon>Aspergillus</taxon>
        <taxon>Aspergillus subgen. Fumigati</taxon>
    </lineage>
</organism>
<protein>
    <recommendedName>
        <fullName>NADH-cytochrome b5 reductase 2</fullName>
        <ecNumber>1.6.2.2</ecNumber>
    </recommendedName>
    <alternativeName>
        <fullName>Mitochondrial cytochrome b reductase</fullName>
    </alternativeName>
</protein>
<feature type="chain" id="PRO_0000330185" description="NADH-cytochrome b5 reductase 2">
    <location>
        <begin position="1"/>
        <end position="323"/>
    </location>
</feature>
<feature type="transmembrane region" description="Helical" evidence="2">
    <location>
        <begin position="32"/>
        <end position="48"/>
    </location>
</feature>
<feature type="domain" description="FAD-binding FR-type" evidence="3">
    <location>
        <begin position="72"/>
        <end position="177"/>
    </location>
</feature>
<feature type="binding site" evidence="1">
    <location>
        <begin position="180"/>
        <end position="215"/>
    </location>
    <ligand>
        <name>FAD</name>
        <dbReference type="ChEBI" id="CHEBI:57692"/>
    </ligand>
</feature>
<accession>A1D4H0</accession>
<proteinExistence type="inferred from homology"/>
<name>MCR1_NEOFI</name>
<comment type="function">
    <text evidence="1">May mediate the reduction of outer membrane cytochrome b5.</text>
</comment>
<comment type="catalytic activity">
    <reaction>
        <text>2 Fe(III)-[cytochrome b5] + NADH = 2 Fe(II)-[cytochrome b5] + NAD(+) + H(+)</text>
        <dbReference type="Rhea" id="RHEA:46680"/>
        <dbReference type="Rhea" id="RHEA-COMP:10438"/>
        <dbReference type="Rhea" id="RHEA-COMP:10439"/>
        <dbReference type="ChEBI" id="CHEBI:15378"/>
        <dbReference type="ChEBI" id="CHEBI:29033"/>
        <dbReference type="ChEBI" id="CHEBI:29034"/>
        <dbReference type="ChEBI" id="CHEBI:57540"/>
        <dbReference type="ChEBI" id="CHEBI:57945"/>
        <dbReference type="EC" id="1.6.2.2"/>
    </reaction>
</comment>
<comment type="cofactor">
    <cofactor evidence="1">
        <name>FAD</name>
        <dbReference type="ChEBI" id="CHEBI:57692"/>
    </cofactor>
</comment>
<comment type="subcellular location">
    <subcellularLocation>
        <location evidence="1">Mitochondrion outer membrane</location>
        <topology evidence="1">Single-pass membrane protein</topology>
    </subcellularLocation>
</comment>
<comment type="similarity">
    <text evidence="4">Belongs to the flavoprotein pyridine nucleotide cytochrome reductase family.</text>
</comment>
<keyword id="KW-0274">FAD</keyword>
<keyword id="KW-0285">Flavoprotein</keyword>
<keyword id="KW-0472">Membrane</keyword>
<keyword id="KW-0496">Mitochondrion</keyword>
<keyword id="KW-1000">Mitochondrion outer membrane</keyword>
<keyword id="KW-0520">NAD</keyword>
<keyword id="KW-0560">Oxidoreductase</keyword>
<keyword id="KW-1185">Reference proteome</keyword>
<keyword id="KW-0812">Transmembrane</keyword>
<keyword id="KW-1133">Transmembrane helix</keyword>
<dbReference type="EC" id="1.6.2.2"/>
<dbReference type="EMBL" id="DS027688">
    <property type="protein sequence ID" value="EAW23313.1"/>
    <property type="molecule type" value="Genomic_DNA"/>
</dbReference>
<dbReference type="RefSeq" id="XP_001265210.1">
    <property type="nucleotide sequence ID" value="XM_001265209.1"/>
</dbReference>
<dbReference type="SMR" id="A1D4H0"/>
<dbReference type="STRING" id="331117.A1D4H0"/>
<dbReference type="EnsemblFungi" id="EAW23313">
    <property type="protein sequence ID" value="EAW23313"/>
    <property type="gene ID" value="NFIA_020210"/>
</dbReference>
<dbReference type="GeneID" id="4591841"/>
<dbReference type="KEGG" id="nfi:NFIA_020210"/>
<dbReference type="VEuPathDB" id="FungiDB:NFIA_020210"/>
<dbReference type="eggNOG" id="KOG0534">
    <property type="taxonomic scope" value="Eukaryota"/>
</dbReference>
<dbReference type="HOGENOM" id="CLU_003827_9_1_1"/>
<dbReference type="OMA" id="KGPEMQK"/>
<dbReference type="OrthoDB" id="432685at2759"/>
<dbReference type="Proteomes" id="UP000006702">
    <property type="component" value="Unassembled WGS sequence"/>
</dbReference>
<dbReference type="GO" id="GO:0005741">
    <property type="term" value="C:mitochondrial outer membrane"/>
    <property type="evidence" value="ECO:0007669"/>
    <property type="project" value="UniProtKB-SubCell"/>
</dbReference>
<dbReference type="GO" id="GO:0004128">
    <property type="term" value="F:cytochrome-b5 reductase activity, acting on NAD(P)H"/>
    <property type="evidence" value="ECO:0007669"/>
    <property type="project" value="UniProtKB-EC"/>
</dbReference>
<dbReference type="GO" id="GO:0006696">
    <property type="term" value="P:ergosterol biosynthetic process"/>
    <property type="evidence" value="ECO:0007669"/>
    <property type="project" value="TreeGrafter"/>
</dbReference>
<dbReference type="CDD" id="cd06183">
    <property type="entry name" value="cyt_b5_reduct_like"/>
    <property type="match status" value="1"/>
</dbReference>
<dbReference type="FunFam" id="2.40.30.10:FF:000032">
    <property type="entry name" value="NADH-cytochrome b5 reductase"/>
    <property type="match status" value="1"/>
</dbReference>
<dbReference type="FunFam" id="3.40.50.80:FF:000009">
    <property type="entry name" value="NADH-cytochrome b5 reductase"/>
    <property type="match status" value="1"/>
</dbReference>
<dbReference type="Gene3D" id="3.40.50.80">
    <property type="entry name" value="Nucleotide-binding domain of ferredoxin-NADP reductase (FNR) module"/>
    <property type="match status" value="1"/>
</dbReference>
<dbReference type="Gene3D" id="2.40.30.10">
    <property type="entry name" value="Translation factors"/>
    <property type="match status" value="1"/>
</dbReference>
<dbReference type="InterPro" id="IPR001834">
    <property type="entry name" value="CBR-like"/>
</dbReference>
<dbReference type="InterPro" id="IPR008333">
    <property type="entry name" value="Cbr1-like_FAD-bd_dom"/>
</dbReference>
<dbReference type="InterPro" id="IPR017927">
    <property type="entry name" value="FAD-bd_FR_type"/>
</dbReference>
<dbReference type="InterPro" id="IPR001709">
    <property type="entry name" value="Flavoprot_Pyr_Nucl_cyt_Rdtase"/>
</dbReference>
<dbReference type="InterPro" id="IPR039261">
    <property type="entry name" value="FNR_nucleotide-bd"/>
</dbReference>
<dbReference type="InterPro" id="IPR001433">
    <property type="entry name" value="OxRdtase_FAD/NAD-bd"/>
</dbReference>
<dbReference type="InterPro" id="IPR017938">
    <property type="entry name" value="Riboflavin_synthase-like_b-brl"/>
</dbReference>
<dbReference type="PANTHER" id="PTHR19370">
    <property type="entry name" value="NADH-CYTOCHROME B5 REDUCTASE"/>
    <property type="match status" value="1"/>
</dbReference>
<dbReference type="PANTHER" id="PTHR19370:SF171">
    <property type="entry name" value="NADH-CYTOCHROME B5 REDUCTASE 2"/>
    <property type="match status" value="1"/>
</dbReference>
<dbReference type="Pfam" id="PF00970">
    <property type="entry name" value="FAD_binding_6"/>
    <property type="match status" value="1"/>
</dbReference>
<dbReference type="Pfam" id="PF00175">
    <property type="entry name" value="NAD_binding_1"/>
    <property type="match status" value="1"/>
</dbReference>
<dbReference type="PRINTS" id="PR00406">
    <property type="entry name" value="CYTB5RDTASE"/>
</dbReference>
<dbReference type="PRINTS" id="PR00371">
    <property type="entry name" value="FPNCR"/>
</dbReference>
<dbReference type="SUPFAM" id="SSF52343">
    <property type="entry name" value="Ferredoxin reductase-like, C-terminal NADP-linked domain"/>
    <property type="match status" value="1"/>
</dbReference>
<dbReference type="SUPFAM" id="SSF63380">
    <property type="entry name" value="Riboflavin synthase domain-like"/>
    <property type="match status" value="1"/>
</dbReference>
<dbReference type="PROSITE" id="PS51384">
    <property type="entry name" value="FAD_FR"/>
    <property type="match status" value="1"/>
</dbReference>
<sequence length="323" mass="36231">MFARQSLRFAQPLKQGFRKYSTEAPSKGKSSLAPIYVAVGLTGLGVGLYRYNSASAEAPPAERPKVFTGGDQGWVDLKLAQIENLSPNTKRLRFEFPDKEAVSGLHVASALLTKFKPHGAEKPVIRPYTPVSDEEQPGYLDLVVKVYPNGPMSEHLHSMNVDQRLEFKGPIPKYPWEANKHKHICLIAGGTGITPMYQLARKIFKDPEDQTKVTLVFGNVREEDILLKKELQELENTYPRRFRAFYVLDHPPKEWTGGKGYITKELLKTVLPEPKEENIKIFVCGPPGMYKSISGPKVSPKDQGELTGILAELGYSKDQVFKF</sequence>
<reference key="1">
    <citation type="journal article" date="2008" name="PLoS Genet.">
        <title>Genomic islands in the pathogenic filamentous fungus Aspergillus fumigatus.</title>
        <authorList>
            <person name="Fedorova N.D."/>
            <person name="Khaldi N."/>
            <person name="Joardar V.S."/>
            <person name="Maiti R."/>
            <person name="Amedeo P."/>
            <person name="Anderson M.J."/>
            <person name="Crabtree J."/>
            <person name="Silva J.C."/>
            <person name="Badger J.H."/>
            <person name="Albarraq A."/>
            <person name="Angiuoli S."/>
            <person name="Bussey H."/>
            <person name="Bowyer P."/>
            <person name="Cotty P.J."/>
            <person name="Dyer P.S."/>
            <person name="Egan A."/>
            <person name="Galens K."/>
            <person name="Fraser-Liggett C.M."/>
            <person name="Haas B.J."/>
            <person name="Inman J.M."/>
            <person name="Kent R."/>
            <person name="Lemieux S."/>
            <person name="Malavazi I."/>
            <person name="Orvis J."/>
            <person name="Roemer T."/>
            <person name="Ronning C.M."/>
            <person name="Sundaram J.P."/>
            <person name="Sutton G."/>
            <person name="Turner G."/>
            <person name="Venter J.C."/>
            <person name="White O.R."/>
            <person name="Whitty B.R."/>
            <person name="Youngman P."/>
            <person name="Wolfe K.H."/>
            <person name="Goldman G.H."/>
            <person name="Wortman J.R."/>
            <person name="Jiang B."/>
            <person name="Denning D.W."/>
            <person name="Nierman W.C."/>
        </authorList>
    </citation>
    <scope>NUCLEOTIDE SEQUENCE [LARGE SCALE GENOMIC DNA]</scope>
    <source>
        <strain>ATCC 1020 / DSM 3700 / CBS 544.65 / FGSC A1164 / JCM 1740 / NRRL 181 / WB 181</strain>
    </source>
</reference>